<reference key="1">
    <citation type="journal article" date="2008" name="J. Bacteriol.">
        <title>Genome sequence of Staphylococcus aureus strain Newman and comparative analysis of staphylococcal genomes: polymorphism and evolution of two major pathogenicity islands.</title>
        <authorList>
            <person name="Baba T."/>
            <person name="Bae T."/>
            <person name="Schneewind O."/>
            <person name="Takeuchi F."/>
            <person name="Hiramatsu K."/>
        </authorList>
    </citation>
    <scope>NUCLEOTIDE SEQUENCE [LARGE SCALE GENOMIC DNA]</scope>
    <source>
        <strain>Newman</strain>
    </source>
</reference>
<organism>
    <name type="scientific">Staphylococcus aureus (strain Newman)</name>
    <dbReference type="NCBI Taxonomy" id="426430"/>
    <lineage>
        <taxon>Bacteria</taxon>
        <taxon>Bacillati</taxon>
        <taxon>Bacillota</taxon>
        <taxon>Bacilli</taxon>
        <taxon>Bacillales</taxon>
        <taxon>Staphylococcaceae</taxon>
        <taxon>Staphylococcus</taxon>
    </lineage>
</organism>
<sequence>MHILVTGFAPFDNQNINPSWEAVTQLEDIIGTHTIDKLKLPTSFKKVDNIINKTLASNHYDVVLAIGQAGGRNAITPERVAINIDDARIPDNDDFQPIDQAIHLDGAPAYFSNLPVKAMTQSIINQGLPGALSNSAGTFVCNHTLYHLGYLQDKHYPHLRFGFIHVPYIPEQVIGKPDTPSMPLEKIVAGLTAAIEAISNDEDLHLALGTTE</sequence>
<keyword id="KW-0963">Cytoplasm</keyword>
<keyword id="KW-0378">Hydrolase</keyword>
<keyword id="KW-0645">Protease</keyword>
<keyword id="KW-0788">Thiol protease</keyword>
<proteinExistence type="inferred from homology"/>
<feature type="chain" id="PRO_1000072291" description="Pyrrolidone-carboxylate peptidase">
    <location>
        <begin position="1"/>
        <end position="212"/>
    </location>
</feature>
<feature type="active site" evidence="1">
    <location>
        <position position="78"/>
    </location>
</feature>
<feature type="active site" evidence="1">
    <location>
        <position position="141"/>
    </location>
</feature>
<feature type="active site" evidence="1">
    <location>
        <position position="165"/>
    </location>
</feature>
<name>PCP_STAAE</name>
<evidence type="ECO:0000255" key="1">
    <source>
        <dbReference type="HAMAP-Rule" id="MF_00417"/>
    </source>
</evidence>
<protein>
    <recommendedName>
        <fullName evidence="1">Pyrrolidone-carboxylate peptidase</fullName>
        <ecNumber evidence="1">3.4.19.3</ecNumber>
    </recommendedName>
    <alternativeName>
        <fullName evidence="1">5-oxoprolyl-peptidase</fullName>
    </alternativeName>
    <alternativeName>
        <fullName evidence="1">Pyroglutamyl-peptidase I</fullName>
        <shortName evidence="1">PGP-I</shortName>
        <shortName evidence="1">Pyrase</shortName>
    </alternativeName>
</protein>
<accession>A6QKH8</accession>
<comment type="function">
    <text evidence="1">Removes 5-oxoproline from various penultimate amino acid residues except L-proline.</text>
</comment>
<comment type="catalytic activity">
    <reaction evidence="1">
        <text>Release of an N-terminal pyroglutamyl group from a polypeptide, the second amino acid generally not being Pro.</text>
        <dbReference type="EC" id="3.4.19.3"/>
    </reaction>
</comment>
<comment type="subunit">
    <text evidence="1">Homotetramer.</text>
</comment>
<comment type="subcellular location">
    <subcellularLocation>
        <location evidence="1">Cytoplasm</location>
    </subcellularLocation>
</comment>
<comment type="similarity">
    <text evidence="1">Belongs to the peptidase C15 family.</text>
</comment>
<gene>
    <name evidence="1" type="primary">pcp</name>
    <name type="ordered locus">NWMN_2588</name>
</gene>
<dbReference type="EC" id="3.4.19.3" evidence="1"/>
<dbReference type="EMBL" id="AP009351">
    <property type="protein sequence ID" value="BAF68860.1"/>
    <property type="molecule type" value="Genomic_DNA"/>
</dbReference>
<dbReference type="RefSeq" id="WP_000547833.1">
    <property type="nucleotide sequence ID" value="NZ_JBBIAE010000005.1"/>
</dbReference>
<dbReference type="SMR" id="A6QKH8"/>
<dbReference type="MEROPS" id="C15.001"/>
<dbReference type="KEGG" id="sae:NWMN_2588"/>
<dbReference type="HOGENOM" id="CLU_043960_4_0_9"/>
<dbReference type="Proteomes" id="UP000006386">
    <property type="component" value="Chromosome"/>
</dbReference>
<dbReference type="GO" id="GO:0005829">
    <property type="term" value="C:cytosol"/>
    <property type="evidence" value="ECO:0007669"/>
    <property type="project" value="InterPro"/>
</dbReference>
<dbReference type="GO" id="GO:0016920">
    <property type="term" value="F:pyroglutamyl-peptidase activity"/>
    <property type="evidence" value="ECO:0007669"/>
    <property type="project" value="UniProtKB-UniRule"/>
</dbReference>
<dbReference type="GO" id="GO:0006508">
    <property type="term" value="P:proteolysis"/>
    <property type="evidence" value="ECO:0007669"/>
    <property type="project" value="UniProtKB-KW"/>
</dbReference>
<dbReference type="CDD" id="cd00501">
    <property type="entry name" value="Peptidase_C15"/>
    <property type="match status" value="1"/>
</dbReference>
<dbReference type="FunFam" id="3.40.630.20:FF:000001">
    <property type="entry name" value="Pyrrolidone-carboxylate peptidase"/>
    <property type="match status" value="1"/>
</dbReference>
<dbReference type="Gene3D" id="3.40.630.20">
    <property type="entry name" value="Peptidase C15, pyroglutamyl peptidase I-like"/>
    <property type="match status" value="1"/>
</dbReference>
<dbReference type="HAMAP" id="MF_00417">
    <property type="entry name" value="Pyrrolid_peptidase"/>
    <property type="match status" value="1"/>
</dbReference>
<dbReference type="InterPro" id="IPR000816">
    <property type="entry name" value="Peptidase_C15"/>
</dbReference>
<dbReference type="InterPro" id="IPR016125">
    <property type="entry name" value="Peptidase_C15-like"/>
</dbReference>
<dbReference type="InterPro" id="IPR036440">
    <property type="entry name" value="Peptidase_C15-like_sf"/>
</dbReference>
<dbReference type="InterPro" id="IPR029762">
    <property type="entry name" value="PGP-I_bact-type"/>
</dbReference>
<dbReference type="InterPro" id="IPR033694">
    <property type="entry name" value="PGPEP1_Cys_AS"/>
</dbReference>
<dbReference type="InterPro" id="IPR033693">
    <property type="entry name" value="PGPEP1_Glu_AS"/>
</dbReference>
<dbReference type="NCBIfam" id="NF009676">
    <property type="entry name" value="PRK13197.1"/>
    <property type="match status" value="1"/>
</dbReference>
<dbReference type="NCBIfam" id="TIGR00504">
    <property type="entry name" value="pyro_pdase"/>
    <property type="match status" value="1"/>
</dbReference>
<dbReference type="PANTHER" id="PTHR23402">
    <property type="entry name" value="PROTEASE FAMILY C15 PYROGLUTAMYL-PEPTIDASE I-RELATED"/>
    <property type="match status" value="1"/>
</dbReference>
<dbReference type="PANTHER" id="PTHR23402:SF1">
    <property type="entry name" value="PYROGLUTAMYL-PEPTIDASE I"/>
    <property type="match status" value="1"/>
</dbReference>
<dbReference type="Pfam" id="PF01470">
    <property type="entry name" value="Peptidase_C15"/>
    <property type="match status" value="1"/>
</dbReference>
<dbReference type="PIRSF" id="PIRSF015592">
    <property type="entry name" value="Prld-crbxl_pptds"/>
    <property type="match status" value="1"/>
</dbReference>
<dbReference type="PRINTS" id="PR00706">
    <property type="entry name" value="PYROGLUPTASE"/>
</dbReference>
<dbReference type="SUPFAM" id="SSF53182">
    <property type="entry name" value="Pyrrolidone carboxyl peptidase (pyroglutamate aminopeptidase)"/>
    <property type="match status" value="1"/>
</dbReference>
<dbReference type="PROSITE" id="PS01334">
    <property type="entry name" value="PYRASE_CYS"/>
    <property type="match status" value="1"/>
</dbReference>
<dbReference type="PROSITE" id="PS01333">
    <property type="entry name" value="PYRASE_GLU"/>
    <property type="match status" value="1"/>
</dbReference>